<accession>P47515</accession>
<gene>
    <name type="primary">pdhB</name>
    <name type="ordered locus">MG273</name>
</gene>
<comment type="function">
    <text evidence="1">The pyruvate dehydrogenase complex catalyzes the overall conversion of pyruvate to acetyl-CoA and CO(2). It contains multiple copies of three enzymatic components: pyruvate dehydrogenase (E1), dihydrolipoamide acetyltransferase (E2) and lipoamide dehydrogenase (E3) (By similarity).</text>
</comment>
<comment type="catalytic activity">
    <reaction>
        <text>N(6)-[(R)-lipoyl]-L-lysyl-[protein] + pyruvate + H(+) = N(6)-[(R)-S(8)-acetyldihydrolipoyl]-L-lysyl-[protein] + CO2</text>
        <dbReference type="Rhea" id="RHEA:19189"/>
        <dbReference type="Rhea" id="RHEA-COMP:10474"/>
        <dbReference type="Rhea" id="RHEA-COMP:10478"/>
        <dbReference type="ChEBI" id="CHEBI:15361"/>
        <dbReference type="ChEBI" id="CHEBI:15378"/>
        <dbReference type="ChEBI" id="CHEBI:16526"/>
        <dbReference type="ChEBI" id="CHEBI:83099"/>
        <dbReference type="ChEBI" id="CHEBI:83111"/>
        <dbReference type="EC" id="1.2.4.1"/>
    </reaction>
</comment>
<comment type="cofactor">
    <cofactor evidence="1">
        <name>thiamine diphosphate</name>
        <dbReference type="ChEBI" id="CHEBI:58937"/>
    </cofactor>
</comment>
<comment type="subunit">
    <text evidence="1">Heterodimer of an alpha and a beta chain.</text>
</comment>
<feature type="chain" id="PRO_0000162223" description="Pyruvate dehydrogenase E1 component subunit beta">
    <location>
        <begin position="1"/>
        <end position="326"/>
    </location>
</feature>
<feature type="binding site" evidence="1">
    <location>
        <position position="62"/>
    </location>
    <ligand>
        <name>thiamine diphosphate</name>
        <dbReference type="ChEBI" id="CHEBI:58937"/>
    </ligand>
</feature>
<protein>
    <recommendedName>
        <fullName>Pyruvate dehydrogenase E1 component subunit beta</fullName>
        <ecNumber>1.2.4.1</ecNumber>
    </recommendedName>
</protein>
<organism>
    <name type="scientific">Mycoplasma genitalium (strain ATCC 33530 / DSM 19775 / NCTC 10195 / G37)</name>
    <name type="common">Mycoplasmoides genitalium</name>
    <dbReference type="NCBI Taxonomy" id="243273"/>
    <lineage>
        <taxon>Bacteria</taxon>
        <taxon>Bacillati</taxon>
        <taxon>Mycoplasmatota</taxon>
        <taxon>Mycoplasmoidales</taxon>
        <taxon>Mycoplasmoidaceae</taxon>
        <taxon>Mycoplasmoides</taxon>
    </lineage>
</organism>
<evidence type="ECO:0000250" key="1"/>
<name>ODPB_MYCGE</name>
<proteinExistence type="inferred from homology"/>
<reference key="1">
    <citation type="journal article" date="1995" name="Science">
        <title>The minimal gene complement of Mycoplasma genitalium.</title>
        <authorList>
            <person name="Fraser C.M."/>
            <person name="Gocayne J.D."/>
            <person name="White O."/>
            <person name="Adams M.D."/>
            <person name="Clayton R.A."/>
            <person name="Fleischmann R.D."/>
            <person name="Bult C.J."/>
            <person name="Kerlavage A.R."/>
            <person name="Sutton G.G."/>
            <person name="Kelley J.M."/>
            <person name="Fritchman J.L."/>
            <person name="Weidman J.F."/>
            <person name="Small K.V."/>
            <person name="Sandusky M."/>
            <person name="Fuhrmann J.L."/>
            <person name="Nguyen D.T."/>
            <person name="Utterback T.R."/>
            <person name="Saudek D.M."/>
            <person name="Phillips C.A."/>
            <person name="Merrick J.M."/>
            <person name="Tomb J.-F."/>
            <person name="Dougherty B.A."/>
            <person name="Bott K.F."/>
            <person name="Hu P.-C."/>
            <person name="Lucier T.S."/>
            <person name="Peterson S.N."/>
            <person name="Smith H.O."/>
            <person name="Hutchison C.A. III"/>
            <person name="Venter J.C."/>
        </authorList>
    </citation>
    <scope>NUCLEOTIDE SEQUENCE [LARGE SCALE GENOMIC DNA]</scope>
    <source>
        <strain>ATCC 33530 / DSM 19775 / NCTC 10195 / G37</strain>
    </source>
</reference>
<keyword id="KW-0560">Oxidoreductase</keyword>
<keyword id="KW-0670">Pyruvate</keyword>
<keyword id="KW-1185">Reference proteome</keyword>
<keyword id="KW-0786">Thiamine pyrophosphate</keyword>
<dbReference type="EC" id="1.2.4.1"/>
<dbReference type="EMBL" id="L43967">
    <property type="protein sequence ID" value="AAC71495.1"/>
    <property type="molecule type" value="Genomic_DNA"/>
</dbReference>
<dbReference type="PIR" id="B64230">
    <property type="entry name" value="B64230"/>
</dbReference>
<dbReference type="RefSeq" id="WP_009885905.1">
    <property type="nucleotide sequence ID" value="NC_000908.2"/>
</dbReference>
<dbReference type="SMR" id="P47515"/>
<dbReference type="FunCoup" id="P47515">
    <property type="interactions" value="149"/>
</dbReference>
<dbReference type="STRING" id="243273.MG_273"/>
<dbReference type="GeneID" id="88282429"/>
<dbReference type="KEGG" id="mge:MG_273"/>
<dbReference type="eggNOG" id="COG0022">
    <property type="taxonomic scope" value="Bacteria"/>
</dbReference>
<dbReference type="HOGENOM" id="CLU_012907_1_0_14"/>
<dbReference type="InParanoid" id="P47515"/>
<dbReference type="OrthoDB" id="8732661at2"/>
<dbReference type="BioCyc" id="MGEN243273:G1GJ2-331-MONOMER"/>
<dbReference type="Proteomes" id="UP000000807">
    <property type="component" value="Chromosome"/>
</dbReference>
<dbReference type="GO" id="GO:0140032">
    <property type="term" value="F:glycosylation-dependent protein binding"/>
    <property type="evidence" value="ECO:0000353"/>
    <property type="project" value="UniProtKB"/>
</dbReference>
<dbReference type="GO" id="GO:0004739">
    <property type="term" value="F:pyruvate dehydrogenase (acetyl-transferring) activity"/>
    <property type="evidence" value="ECO:0007669"/>
    <property type="project" value="UniProtKB-EC"/>
</dbReference>
<dbReference type="GO" id="GO:0009083">
    <property type="term" value="P:branched-chain amino acid catabolic process"/>
    <property type="evidence" value="ECO:0000318"/>
    <property type="project" value="GO_Central"/>
</dbReference>
<dbReference type="GO" id="GO:0007584">
    <property type="term" value="P:response to nutrient"/>
    <property type="evidence" value="ECO:0000318"/>
    <property type="project" value="GO_Central"/>
</dbReference>
<dbReference type="CDD" id="cd07036">
    <property type="entry name" value="TPP_PYR_E1-PDHc-beta_like"/>
    <property type="match status" value="1"/>
</dbReference>
<dbReference type="FunFam" id="3.40.50.970:FF:000001">
    <property type="entry name" value="Pyruvate dehydrogenase E1 beta subunit"/>
    <property type="match status" value="1"/>
</dbReference>
<dbReference type="Gene3D" id="3.40.50.920">
    <property type="match status" value="1"/>
</dbReference>
<dbReference type="Gene3D" id="3.40.50.970">
    <property type="match status" value="1"/>
</dbReference>
<dbReference type="InterPro" id="IPR029061">
    <property type="entry name" value="THDP-binding"/>
</dbReference>
<dbReference type="InterPro" id="IPR009014">
    <property type="entry name" value="Transketo_C/PFOR_II"/>
</dbReference>
<dbReference type="InterPro" id="IPR005475">
    <property type="entry name" value="Transketolase-like_Pyr-bd"/>
</dbReference>
<dbReference type="InterPro" id="IPR033248">
    <property type="entry name" value="Transketolase_C"/>
</dbReference>
<dbReference type="PANTHER" id="PTHR43257">
    <property type="entry name" value="PYRUVATE DEHYDROGENASE E1 COMPONENT BETA SUBUNIT"/>
    <property type="match status" value="1"/>
</dbReference>
<dbReference type="PANTHER" id="PTHR43257:SF2">
    <property type="entry name" value="PYRUVATE DEHYDROGENASE E1 COMPONENT SUBUNIT BETA"/>
    <property type="match status" value="1"/>
</dbReference>
<dbReference type="Pfam" id="PF02779">
    <property type="entry name" value="Transket_pyr"/>
    <property type="match status" value="1"/>
</dbReference>
<dbReference type="Pfam" id="PF02780">
    <property type="entry name" value="Transketolase_C"/>
    <property type="match status" value="1"/>
</dbReference>
<dbReference type="SMART" id="SM00861">
    <property type="entry name" value="Transket_pyr"/>
    <property type="match status" value="1"/>
</dbReference>
<dbReference type="SUPFAM" id="SSF52518">
    <property type="entry name" value="Thiamin diphosphate-binding fold (THDP-binding)"/>
    <property type="match status" value="1"/>
</dbReference>
<dbReference type="SUPFAM" id="SSF52922">
    <property type="entry name" value="TK C-terminal domain-like"/>
    <property type="match status" value="1"/>
</dbReference>
<sequence length="326" mass="36026">MSKIQVNNIEALNNAMDLALERDQNVVLYGQDAGFEGGVFRATKGLQQKYGSERVWDCPIAENSMAGIGVGAAIGGLKPIVEIQFSGFSFPAMFQIFVHAARIRNRSRGVYTAPLVVRMPMGGGIKALEHHSETLEAIYAQIAGLKTVMPSNPYDTKGLFLAAIESPDPVIFFEPKKLYRAFRQEIPSDYYTVPIGEANLISEGSELTIVSYGPTMFDLINLVYSGELKDKGIELIDLRTISPWDKQTVFNSVKKTGRLLVVTEAVKSFTTSAEIITSVTEELFTYLKKAPQRVTGFDIVVPLARGEKYQFEINARVIDAVNQLLK</sequence>